<comment type="similarity">
    <text evidence="2">Belongs to the UPF0337 (CsbD) family.</text>
</comment>
<dbReference type="EMBL" id="AE015929">
    <property type="protein sequence ID" value="AAO04201.1"/>
    <property type="molecule type" value="Genomic_DNA"/>
</dbReference>
<dbReference type="RefSeq" id="NP_764159.1">
    <property type="nucleotide sequence ID" value="NC_004461.1"/>
</dbReference>
<dbReference type="RefSeq" id="WP_001831967.1">
    <property type="nucleotide sequence ID" value="NZ_WBME01000029.1"/>
</dbReference>
<dbReference type="SMR" id="Q8CTA8"/>
<dbReference type="KEGG" id="sep:SE_0604"/>
<dbReference type="PATRIC" id="fig|176280.10.peg.575"/>
<dbReference type="eggNOG" id="COG3237">
    <property type="taxonomic scope" value="Bacteria"/>
</dbReference>
<dbReference type="HOGENOM" id="CLU_135567_0_3_9"/>
<dbReference type="Proteomes" id="UP000001411">
    <property type="component" value="Chromosome"/>
</dbReference>
<dbReference type="Gene3D" id="1.10.1470.10">
    <property type="entry name" value="YjbJ"/>
    <property type="match status" value="1"/>
</dbReference>
<dbReference type="InterPro" id="IPR008462">
    <property type="entry name" value="CsbD"/>
</dbReference>
<dbReference type="InterPro" id="IPR036629">
    <property type="entry name" value="YjbJ_sf"/>
</dbReference>
<dbReference type="Pfam" id="PF05532">
    <property type="entry name" value="CsbD"/>
    <property type="match status" value="1"/>
</dbReference>
<dbReference type="SUPFAM" id="SSF69047">
    <property type="entry name" value="Hypothetical protein YjbJ"/>
    <property type="match status" value="1"/>
</dbReference>
<protein>
    <recommendedName>
        <fullName>UPF0337 protein SE_0604</fullName>
    </recommendedName>
</protein>
<evidence type="ECO:0000256" key="1">
    <source>
        <dbReference type="SAM" id="MobiDB-lite"/>
    </source>
</evidence>
<evidence type="ECO:0000305" key="2"/>
<organism>
    <name type="scientific">Staphylococcus epidermidis (strain ATCC 12228 / FDA PCI 1200)</name>
    <dbReference type="NCBI Taxonomy" id="176280"/>
    <lineage>
        <taxon>Bacteria</taxon>
        <taxon>Bacillati</taxon>
        <taxon>Bacillota</taxon>
        <taxon>Bacilli</taxon>
        <taxon>Bacillales</taxon>
        <taxon>Staphylococcaceae</taxon>
        <taxon>Staphylococcus</taxon>
    </lineage>
</organism>
<gene>
    <name type="ordered locus">SE_0604</name>
</gene>
<name>Y604_STAES</name>
<sequence length="63" mass="6812">MAEDKFEQAKGNIKETVGNATDNKELEKDGKGDKASGKAKEAVENVKEKANDVIDKFKGNKGD</sequence>
<accession>Q8CTA8</accession>
<proteinExistence type="inferred from homology"/>
<feature type="chain" id="PRO_0000210038" description="UPF0337 protein SE_0604">
    <location>
        <begin position="1"/>
        <end position="63"/>
    </location>
</feature>
<feature type="region of interest" description="Disordered" evidence="1">
    <location>
        <begin position="1"/>
        <end position="46"/>
    </location>
</feature>
<feature type="compositionally biased region" description="Basic and acidic residues" evidence="1">
    <location>
        <begin position="22"/>
        <end position="46"/>
    </location>
</feature>
<reference key="1">
    <citation type="journal article" date="2003" name="Mol. Microbiol.">
        <title>Genome-based analysis of virulence genes in a non-biofilm-forming Staphylococcus epidermidis strain (ATCC 12228).</title>
        <authorList>
            <person name="Zhang Y.-Q."/>
            <person name="Ren S.-X."/>
            <person name="Li H.-L."/>
            <person name="Wang Y.-X."/>
            <person name="Fu G."/>
            <person name="Yang J."/>
            <person name="Qin Z.-Q."/>
            <person name="Miao Y.-G."/>
            <person name="Wang W.-Y."/>
            <person name="Chen R.-S."/>
            <person name="Shen Y."/>
            <person name="Chen Z."/>
            <person name="Yuan Z.-H."/>
            <person name="Zhao G.-P."/>
            <person name="Qu D."/>
            <person name="Danchin A."/>
            <person name="Wen Y.-M."/>
        </authorList>
    </citation>
    <scope>NUCLEOTIDE SEQUENCE [LARGE SCALE GENOMIC DNA]</scope>
    <source>
        <strain>ATCC 12228 / FDA PCI 1200</strain>
    </source>
</reference>